<evidence type="ECO:0000250" key="1">
    <source>
        <dbReference type="UniProtKB" id="Q8N661"/>
    </source>
</evidence>
<evidence type="ECO:0000250" key="2">
    <source>
        <dbReference type="UniProtKB" id="Q9D8N3"/>
    </source>
</evidence>
<evidence type="ECO:0000255" key="3"/>
<evidence type="ECO:0000269" key="4">
    <source>
    </source>
</evidence>
<evidence type="ECO:0000305" key="5"/>
<name>TM86B_RAT</name>
<sequence length="233" mass="25912">MPCCDPYPWIGLNVGRLSSFPLLKYPQVRRWLAPFIVACSLYFLLWIPEDQPSWVSALVKCQPILCLVLFLWAVAPGGSYTWLLQGALTCSAVGDACLIWPEAFFYGMAVFSVAHLLYLWAFGLSPLQPGLLLCTTLASLTYYSFLLLHLEPNMVLPVAAYGLILNTMLWRGLVLGRSAGWGAVLFIFSDGVLAWDTFVYTLPFARLVTMSTYYAAQLLLTLSALRSPGLKTH</sequence>
<protein>
    <recommendedName>
        <fullName>Lysoplasmalogenase TMEM86B</fullName>
        <ecNumber evidence="4">3.3.2.2</ecNumber>
    </recommendedName>
    <alternativeName>
        <fullName>Transmembrane protein 86B</fullName>
    </alternativeName>
</protein>
<reference key="1">
    <citation type="journal article" date="2004" name="Genome Res.">
        <title>The status, quality, and expansion of the NIH full-length cDNA project: the Mammalian Gene Collection (MGC).</title>
        <authorList>
            <consortium name="The MGC Project Team"/>
        </authorList>
    </citation>
    <scope>NUCLEOTIDE SEQUENCE [LARGE SCALE MRNA]</scope>
    <source>
        <tissue>Brain</tissue>
    </source>
</reference>
<reference key="2">
    <citation type="journal article" date="2011" name="J. Biol. Chem.">
        <title>Purification, identification, and cloning of lysoplasmalogenase, the enzyme that catalyzes hydrolysis of the vinyl ether bond of lysoplasmalogen.</title>
        <authorList>
            <person name="Wu L.C."/>
            <person name="Pfeiffer D.R."/>
            <person name="Calhoon E.A."/>
            <person name="Madiai F."/>
            <person name="Marcucci G."/>
            <person name="Liu S."/>
            <person name="Jurkowitz M.S."/>
        </authorList>
    </citation>
    <scope>IDENTIFICATION BY MASS SPECTROMETRY</scope>
    <scope>FUNCTION</scope>
    <scope>CATALYTIC ACTIVITY</scope>
    <scope>BIOPHYSICOCHEMICAL PROPERTIES</scope>
</reference>
<keyword id="KW-0963">Cytoplasm</keyword>
<keyword id="KW-0256">Endoplasmic reticulum</keyword>
<keyword id="KW-0378">Hydrolase</keyword>
<keyword id="KW-0443">Lipid metabolism</keyword>
<keyword id="KW-0472">Membrane</keyword>
<keyword id="KW-1185">Reference proteome</keyword>
<keyword id="KW-0812">Transmembrane</keyword>
<keyword id="KW-1133">Transmembrane helix</keyword>
<proteinExistence type="evidence at protein level"/>
<feature type="chain" id="PRO_0000410971" description="Lysoplasmalogenase TMEM86B">
    <location>
        <begin position="1"/>
        <end position="233"/>
    </location>
</feature>
<feature type="topological domain" description="Cytoplasmic" evidence="5">
    <location>
        <begin position="1"/>
        <end position="30"/>
    </location>
</feature>
<feature type="transmembrane region" description="Helical" evidence="3">
    <location>
        <begin position="31"/>
        <end position="47"/>
    </location>
</feature>
<feature type="topological domain" description="Extracellular" evidence="5">
    <location>
        <begin position="48"/>
        <end position="53"/>
    </location>
</feature>
<feature type="transmembrane region" description="Helical" evidence="3">
    <location>
        <begin position="54"/>
        <end position="75"/>
    </location>
</feature>
<feature type="topological domain" description="Cytoplasmic" evidence="5">
    <location>
        <begin position="76"/>
        <end position="81"/>
    </location>
</feature>
<feature type="transmembrane region" description="Helical" evidence="3">
    <location>
        <begin position="82"/>
        <end position="100"/>
    </location>
</feature>
<feature type="topological domain" description="Extracellular" evidence="5">
    <location>
        <begin position="101"/>
        <end position="106"/>
    </location>
</feature>
<feature type="transmembrane region" description="Helical" evidence="3">
    <location>
        <begin position="107"/>
        <end position="124"/>
    </location>
</feature>
<feature type="topological domain" description="Cytoplasmic" evidence="5">
    <location>
        <begin position="125"/>
        <end position="130"/>
    </location>
</feature>
<feature type="transmembrane region" description="Helical" evidence="3">
    <location>
        <begin position="131"/>
        <end position="147"/>
    </location>
</feature>
<feature type="topological domain" description="Extracellular" evidence="5">
    <location>
        <begin position="148"/>
        <end position="153"/>
    </location>
</feature>
<feature type="transmembrane region" description="Helical" evidence="3">
    <location>
        <begin position="154"/>
        <end position="170"/>
    </location>
</feature>
<feature type="topological domain" description="Cytoplasmic" evidence="5">
    <location>
        <begin position="171"/>
        <end position="178"/>
    </location>
</feature>
<feature type="transmembrane region" description="Helical" evidence="3">
    <location>
        <begin position="179"/>
        <end position="195"/>
    </location>
</feature>
<feature type="topological domain" description="Extracellular" evidence="5">
    <location>
        <begin position="196"/>
        <end position="206"/>
    </location>
</feature>
<feature type="transmembrane region" description="Helical" evidence="3">
    <location>
        <begin position="207"/>
        <end position="225"/>
    </location>
</feature>
<feature type="topological domain" description="Cytoplasmic" evidence="5">
    <location>
        <begin position="226"/>
        <end position="233"/>
    </location>
</feature>
<organism>
    <name type="scientific">Rattus norvegicus</name>
    <name type="common">Rat</name>
    <dbReference type="NCBI Taxonomy" id="10116"/>
    <lineage>
        <taxon>Eukaryota</taxon>
        <taxon>Metazoa</taxon>
        <taxon>Chordata</taxon>
        <taxon>Craniata</taxon>
        <taxon>Vertebrata</taxon>
        <taxon>Euteleostomi</taxon>
        <taxon>Mammalia</taxon>
        <taxon>Eutheria</taxon>
        <taxon>Euarchontoglires</taxon>
        <taxon>Glires</taxon>
        <taxon>Rodentia</taxon>
        <taxon>Myomorpha</taxon>
        <taxon>Muroidea</taxon>
        <taxon>Muridae</taxon>
        <taxon>Murinae</taxon>
        <taxon>Rattus</taxon>
    </lineage>
</organism>
<dbReference type="EC" id="3.3.2.2" evidence="4"/>
<dbReference type="EMBL" id="BC158795">
    <property type="protein sequence ID" value="AAI58796.1"/>
    <property type="molecule type" value="mRNA"/>
</dbReference>
<dbReference type="RefSeq" id="XP_006228351.1">
    <property type="nucleotide sequence ID" value="XM_006228289.3"/>
</dbReference>
<dbReference type="RefSeq" id="XP_063130864.1">
    <property type="nucleotide sequence ID" value="XM_063274794.1"/>
</dbReference>
<dbReference type="FunCoup" id="B0BNF0">
    <property type="interactions" value="46"/>
</dbReference>
<dbReference type="STRING" id="10116.ENSRNOP00000071043"/>
<dbReference type="SwissLipids" id="SLP:000000631"/>
<dbReference type="PhosphoSitePlus" id="B0BNF0"/>
<dbReference type="PaxDb" id="10116-ENSRNOP00000040879"/>
<dbReference type="PeptideAtlas" id="B0BNF0"/>
<dbReference type="GeneID" id="690610"/>
<dbReference type="UCSC" id="RGD:1593455">
    <property type="organism name" value="rat"/>
</dbReference>
<dbReference type="AGR" id="RGD:1593455"/>
<dbReference type="RGD" id="1593455">
    <property type="gene designation" value="Tmem86b"/>
</dbReference>
<dbReference type="eggNOG" id="KOG4804">
    <property type="taxonomic scope" value="Eukaryota"/>
</dbReference>
<dbReference type="InParanoid" id="B0BNF0"/>
<dbReference type="PhylomeDB" id="B0BNF0"/>
<dbReference type="Reactome" id="R-RNO-1482788">
    <property type="pathway name" value="Acyl chain remodelling of PC"/>
</dbReference>
<dbReference type="SABIO-RK" id="B0BNF0"/>
<dbReference type="PRO" id="PR:B0BNF0"/>
<dbReference type="Proteomes" id="UP000002494">
    <property type="component" value="Chromosome 1"/>
</dbReference>
<dbReference type="Bgee" id="ENSRNOG00000038607">
    <property type="expression patterns" value="Expressed in liver and 19 other cell types or tissues"/>
</dbReference>
<dbReference type="ExpressionAtlas" id="B0BNF0">
    <property type="expression patterns" value="baseline and differential"/>
</dbReference>
<dbReference type="GO" id="GO:0005737">
    <property type="term" value="C:cytoplasm"/>
    <property type="evidence" value="ECO:0000250"/>
    <property type="project" value="UniProtKB"/>
</dbReference>
<dbReference type="GO" id="GO:0005789">
    <property type="term" value="C:endoplasmic reticulum membrane"/>
    <property type="evidence" value="ECO:0000250"/>
    <property type="project" value="UniProtKB"/>
</dbReference>
<dbReference type="GO" id="GO:0016020">
    <property type="term" value="C:membrane"/>
    <property type="evidence" value="ECO:0000314"/>
    <property type="project" value="RGD"/>
</dbReference>
<dbReference type="GO" id="GO:0047408">
    <property type="term" value="F:alkenylglycerophosphocholine hydrolase activity"/>
    <property type="evidence" value="ECO:0000314"/>
    <property type="project" value="RGD"/>
</dbReference>
<dbReference type="GO" id="GO:0047826">
    <property type="term" value="F:D-lysine 5,6-aminomutase activity"/>
    <property type="evidence" value="ECO:0000250"/>
    <property type="project" value="UniProtKB"/>
</dbReference>
<dbReference type="GO" id="GO:0042802">
    <property type="term" value="F:identical protein binding"/>
    <property type="evidence" value="ECO:0000266"/>
    <property type="project" value="RGD"/>
</dbReference>
<dbReference type="GO" id="GO:0046485">
    <property type="term" value="P:ether lipid metabolic process"/>
    <property type="evidence" value="ECO:0000250"/>
    <property type="project" value="UniProtKB"/>
</dbReference>
<dbReference type="InterPro" id="IPR012506">
    <property type="entry name" value="TMEM86B-like"/>
</dbReference>
<dbReference type="PANTHER" id="PTHR31885">
    <property type="entry name" value="GH04784P"/>
    <property type="match status" value="1"/>
</dbReference>
<dbReference type="PANTHER" id="PTHR31885:SF7">
    <property type="entry name" value="LYSOPLASMALOGENASE"/>
    <property type="match status" value="1"/>
</dbReference>
<dbReference type="Pfam" id="PF07947">
    <property type="entry name" value="YhhN"/>
    <property type="match status" value="1"/>
</dbReference>
<accession>B0BNF0</accession>
<gene>
    <name type="primary">Tmem86b</name>
</gene>
<comment type="function">
    <text evidence="4">Catalyzes the hydrolysis of the vinyl ether bond of choline or ethanolamine lysoplasmalogens, forming fatty aldehyde and glycerophosphocholine or glycerophosphoethanolamine, respectively and is specific for the sn-2-deacylated (lyso) form of plasmalogen.</text>
</comment>
<comment type="catalytic activity">
    <reaction evidence="4">
        <text>a 1-O-(1Z-alkenyl)-sn-glycero-3-phosphocholine + H2O = a 2,3-saturated aldehyde + sn-glycerol 3-phosphocholine</text>
        <dbReference type="Rhea" id="RHEA:22544"/>
        <dbReference type="ChEBI" id="CHEBI:15377"/>
        <dbReference type="ChEBI" id="CHEBI:16870"/>
        <dbReference type="ChEBI" id="CHEBI:73359"/>
        <dbReference type="ChEBI" id="CHEBI:77287"/>
        <dbReference type="EC" id="3.3.2.2"/>
    </reaction>
</comment>
<comment type="catalytic activity">
    <reaction evidence="4">
        <text>a 1-O-(1Z-alkenyl)-sn-glycero-3-phosphoethanolamine + H2O = a 2,3-saturated aldehyde + sn-glycero-3-phosphoethanolamine</text>
        <dbReference type="Rhea" id="RHEA:16905"/>
        <dbReference type="ChEBI" id="CHEBI:15377"/>
        <dbReference type="ChEBI" id="CHEBI:73359"/>
        <dbReference type="ChEBI" id="CHEBI:77288"/>
        <dbReference type="ChEBI" id="CHEBI:143890"/>
        <dbReference type="EC" id="3.3.2.2"/>
    </reaction>
</comment>
<comment type="activity regulation">
    <text evidence="1">Competitively inhibited by lysophosphatidic acid.</text>
</comment>
<comment type="biophysicochemical properties">
    <kinetics>
        <KM evidence="4">50 uM for lysoplasmenyl-choline</KM>
        <KM evidence="4">50 uM for lysoplasmenyl-ethanolamine</KM>
        <Vmax evidence="4">24.5 umol/min/mg enzyme with lysoplasmenyl-choline as substrate</Vmax>
        <Vmax evidence="4">17.5 umol/min/mg enzyme with lysoplasmenyl-ethanolamine as substrate</Vmax>
    </kinetics>
    <phDependence>
        <text evidence="4">Optimum pH is 7.0 with both ethanolamine and choline as substrates. Fifty percent of maximal velocity occurs at pH 5.5 and pH 8.</text>
    </phDependence>
</comment>
<comment type="subunit">
    <text evidence="1">Homodimer.</text>
</comment>
<comment type="subcellular location">
    <subcellularLocation>
        <location evidence="2">Endoplasmic reticulum membrane</location>
        <topology evidence="3">Multi-pass membrane protein</topology>
    </subcellularLocation>
    <subcellularLocation>
        <location evidence="1">Cytoplasm</location>
    </subcellularLocation>
</comment>
<comment type="similarity">
    <text evidence="5">Belongs to the TMEM86 family.</text>
</comment>